<reference key="1">
    <citation type="submission" date="2003-06" db="EMBL/GenBank/DDBJ databases">
        <title>The complete genome sequence of Haemophilus ducreyi.</title>
        <authorList>
            <person name="Munson R.S. Jr."/>
            <person name="Ray W.C."/>
            <person name="Mahairas G."/>
            <person name="Sabo P."/>
            <person name="Mungur R."/>
            <person name="Johnson L."/>
            <person name="Nguyen D."/>
            <person name="Wang J."/>
            <person name="Forst C."/>
            <person name="Hood L."/>
        </authorList>
    </citation>
    <scope>NUCLEOTIDE SEQUENCE [LARGE SCALE GENOMIC DNA]</scope>
    <source>
        <strain>35000HP / ATCC 700724</strain>
    </source>
</reference>
<name>KGUA_HAEDU</name>
<gene>
    <name evidence="1" type="primary">gmk</name>
    <name type="ordered locus">HD_1830</name>
</gene>
<feature type="chain" id="PRO_0000170544" description="Guanylate kinase">
    <location>
        <begin position="1"/>
        <end position="206"/>
    </location>
</feature>
<feature type="domain" description="Guanylate kinase-like" evidence="1">
    <location>
        <begin position="3"/>
        <end position="183"/>
    </location>
</feature>
<feature type="binding site" evidence="1">
    <location>
        <begin position="10"/>
        <end position="17"/>
    </location>
    <ligand>
        <name>ATP</name>
        <dbReference type="ChEBI" id="CHEBI:30616"/>
    </ligand>
</feature>
<evidence type="ECO:0000255" key="1">
    <source>
        <dbReference type="HAMAP-Rule" id="MF_00328"/>
    </source>
</evidence>
<keyword id="KW-0067">ATP-binding</keyword>
<keyword id="KW-0963">Cytoplasm</keyword>
<keyword id="KW-0418">Kinase</keyword>
<keyword id="KW-0547">Nucleotide-binding</keyword>
<keyword id="KW-1185">Reference proteome</keyword>
<keyword id="KW-0808">Transferase</keyword>
<accession>Q7VKP3</accession>
<comment type="function">
    <text evidence="1">Essential for recycling GMP and indirectly, cGMP.</text>
</comment>
<comment type="catalytic activity">
    <reaction evidence="1">
        <text>GMP + ATP = GDP + ADP</text>
        <dbReference type="Rhea" id="RHEA:20780"/>
        <dbReference type="ChEBI" id="CHEBI:30616"/>
        <dbReference type="ChEBI" id="CHEBI:58115"/>
        <dbReference type="ChEBI" id="CHEBI:58189"/>
        <dbReference type="ChEBI" id="CHEBI:456216"/>
        <dbReference type="EC" id="2.7.4.8"/>
    </reaction>
</comment>
<comment type="subcellular location">
    <subcellularLocation>
        <location evidence="1">Cytoplasm</location>
    </subcellularLocation>
</comment>
<comment type="similarity">
    <text evidence="1">Belongs to the guanylate kinase family.</text>
</comment>
<proteinExistence type="inferred from homology"/>
<organism>
    <name type="scientific">Haemophilus ducreyi (strain 35000HP / ATCC 700724)</name>
    <dbReference type="NCBI Taxonomy" id="233412"/>
    <lineage>
        <taxon>Bacteria</taxon>
        <taxon>Pseudomonadati</taxon>
        <taxon>Pseudomonadota</taxon>
        <taxon>Gammaproteobacteria</taxon>
        <taxon>Pasteurellales</taxon>
        <taxon>Pasteurellaceae</taxon>
        <taxon>Haemophilus</taxon>
    </lineage>
</organism>
<protein>
    <recommendedName>
        <fullName evidence="1">Guanylate kinase</fullName>
        <ecNumber evidence="1">2.7.4.8</ecNumber>
    </recommendedName>
    <alternativeName>
        <fullName evidence="1">GMP kinase</fullName>
    </alternativeName>
</protein>
<sequence length="206" mass="23478">MLGNLYILSAPSGAGKSSLINALLADLPRTEVQLSISHTTRQPRVGETHGIHYYFTEHHEFESLIEQGHFLEWARVFDHYYGTSLPMIERSLAQGIDVFLDIDWQGARQIREKVPNVKTIFILPPSRAELEKRLVGRGQDSLETIAKRMEQAVSEMTHYNEFDYVIINDQFKTALTELKSILTAERLKQSAQAIRQQALIAELLAE</sequence>
<dbReference type="EC" id="2.7.4.8" evidence="1"/>
<dbReference type="EMBL" id="AE017143">
    <property type="protein sequence ID" value="AAP96579.1"/>
    <property type="molecule type" value="Genomic_DNA"/>
</dbReference>
<dbReference type="RefSeq" id="WP_010945608.1">
    <property type="nucleotide sequence ID" value="NC_002940.2"/>
</dbReference>
<dbReference type="SMR" id="Q7VKP3"/>
<dbReference type="STRING" id="233412.HD_1830"/>
<dbReference type="KEGG" id="hdu:HD_1830"/>
<dbReference type="eggNOG" id="COG0194">
    <property type="taxonomic scope" value="Bacteria"/>
</dbReference>
<dbReference type="HOGENOM" id="CLU_001715_1_0_6"/>
<dbReference type="OrthoDB" id="9808150at2"/>
<dbReference type="Proteomes" id="UP000001022">
    <property type="component" value="Chromosome"/>
</dbReference>
<dbReference type="GO" id="GO:0005829">
    <property type="term" value="C:cytosol"/>
    <property type="evidence" value="ECO:0007669"/>
    <property type="project" value="TreeGrafter"/>
</dbReference>
<dbReference type="GO" id="GO:0005524">
    <property type="term" value="F:ATP binding"/>
    <property type="evidence" value="ECO:0007669"/>
    <property type="project" value="UniProtKB-UniRule"/>
</dbReference>
<dbReference type="GO" id="GO:0004385">
    <property type="term" value="F:guanylate kinase activity"/>
    <property type="evidence" value="ECO:0007669"/>
    <property type="project" value="UniProtKB-UniRule"/>
</dbReference>
<dbReference type="CDD" id="cd00071">
    <property type="entry name" value="GMPK"/>
    <property type="match status" value="1"/>
</dbReference>
<dbReference type="FunFam" id="3.40.50.300:FF:000855">
    <property type="entry name" value="Guanylate kinase"/>
    <property type="match status" value="1"/>
</dbReference>
<dbReference type="FunFam" id="3.30.63.10:FF:000002">
    <property type="entry name" value="Guanylate kinase 1"/>
    <property type="match status" value="1"/>
</dbReference>
<dbReference type="Gene3D" id="3.30.63.10">
    <property type="entry name" value="Guanylate Kinase phosphate binding domain"/>
    <property type="match status" value="1"/>
</dbReference>
<dbReference type="Gene3D" id="3.40.50.300">
    <property type="entry name" value="P-loop containing nucleotide triphosphate hydrolases"/>
    <property type="match status" value="2"/>
</dbReference>
<dbReference type="HAMAP" id="MF_00328">
    <property type="entry name" value="Guanylate_kinase"/>
    <property type="match status" value="1"/>
</dbReference>
<dbReference type="InterPro" id="IPR008145">
    <property type="entry name" value="GK/Ca_channel_bsu"/>
</dbReference>
<dbReference type="InterPro" id="IPR008144">
    <property type="entry name" value="Guanylate_kin-like_dom"/>
</dbReference>
<dbReference type="InterPro" id="IPR017665">
    <property type="entry name" value="Guanylate_kinase"/>
</dbReference>
<dbReference type="InterPro" id="IPR020590">
    <property type="entry name" value="Guanylate_kinase_CS"/>
</dbReference>
<dbReference type="InterPro" id="IPR027417">
    <property type="entry name" value="P-loop_NTPase"/>
</dbReference>
<dbReference type="NCBIfam" id="TIGR03263">
    <property type="entry name" value="guanyl_kin"/>
    <property type="match status" value="1"/>
</dbReference>
<dbReference type="PANTHER" id="PTHR23117:SF13">
    <property type="entry name" value="GUANYLATE KINASE"/>
    <property type="match status" value="1"/>
</dbReference>
<dbReference type="PANTHER" id="PTHR23117">
    <property type="entry name" value="GUANYLATE KINASE-RELATED"/>
    <property type="match status" value="1"/>
</dbReference>
<dbReference type="Pfam" id="PF00625">
    <property type="entry name" value="Guanylate_kin"/>
    <property type="match status" value="1"/>
</dbReference>
<dbReference type="SMART" id="SM00072">
    <property type="entry name" value="GuKc"/>
    <property type="match status" value="1"/>
</dbReference>
<dbReference type="SUPFAM" id="SSF52540">
    <property type="entry name" value="P-loop containing nucleoside triphosphate hydrolases"/>
    <property type="match status" value="1"/>
</dbReference>
<dbReference type="PROSITE" id="PS00856">
    <property type="entry name" value="GUANYLATE_KINASE_1"/>
    <property type="match status" value="1"/>
</dbReference>
<dbReference type="PROSITE" id="PS50052">
    <property type="entry name" value="GUANYLATE_KINASE_2"/>
    <property type="match status" value="1"/>
</dbReference>